<reference key="1">
    <citation type="journal article" date="1971" name="Biochem. Genet.">
        <title>Primate hemoglobins: some sequences and some proposals concerning the character of evolution and mutation.</title>
        <authorList>
            <person name="Boyer S.H."/>
            <person name="Crosby E.F."/>
            <person name="Noyes A.N."/>
            <person name="Fuller G.F."/>
            <person name="Leslie S.E."/>
            <person name="Donaldson L.J."/>
            <person name="Vrablik G.R."/>
            <person name="Schaefer E.W. Jr."/>
            <person name="Thurmon T.F."/>
        </authorList>
    </citation>
    <scope>PROTEIN SEQUENCE</scope>
</reference>
<organism>
    <name type="scientific">Leontocebus nigricollis</name>
    <name type="common">Black-mantled tamarin</name>
    <name type="synonym">Saguinus nigricollis</name>
    <dbReference type="NCBI Taxonomy" id="9489"/>
    <lineage>
        <taxon>Eukaryota</taxon>
        <taxon>Metazoa</taxon>
        <taxon>Chordata</taxon>
        <taxon>Craniata</taxon>
        <taxon>Vertebrata</taxon>
        <taxon>Euteleostomi</taxon>
        <taxon>Mammalia</taxon>
        <taxon>Eutheria</taxon>
        <taxon>Euarchontoglires</taxon>
        <taxon>Primates</taxon>
        <taxon>Haplorrhini</taxon>
        <taxon>Platyrrhini</taxon>
        <taxon>Cebidae</taxon>
        <taxon>Callitrichinae</taxon>
        <taxon>Leontocebus</taxon>
    </lineage>
</organism>
<protein>
    <recommendedName>
        <fullName>Hemoglobin subunit delta</fullName>
    </recommendedName>
    <alternativeName>
        <fullName>Delta-globin</fullName>
    </alternativeName>
    <alternativeName>
        <fullName>Hemoglobin delta chain</fullName>
    </alternativeName>
</protein>
<gene>
    <name type="primary">HBD</name>
</gene>
<feature type="chain" id="PRO_0000053172" description="Hemoglobin subunit delta">
    <location>
        <begin position="1"/>
        <end position="146"/>
    </location>
</feature>
<feature type="domain" description="Globin" evidence="2">
    <location>
        <begin position="2"/>
        <end position="146"/>
    </location>
</feature>
<feature type="binding site" description="distal binding residue">
    <location>
        <position position="63"/>
    </location>
    <ligand>
        <name>heme b</name>
        <dbReference type="ChEBI" id="CHEBI:60344"/>
    </ligand>
    <ligandPart>
        <name>Fe</name>
        <dbReference type="ChEBI" id="CHEBI:18248"/>
    </ligandPart>
</feature>
<feature type="binding site" description="proximal binding residue">
    <location>
        <position position="92"/>
    </location>
    <ligand>
        <name>heme b</name>
        <dbReference type="ChEBI" id="CHEBI:60344"/>
    </ligand>
    <ligandPart>
        <name>Fe</name>
        <dbReference type="ChEBI" id="CHEBI:18248"/>
    </ligandPart>
</feature>
<feature type="modified residue" description="Phosphoserine" evidence="1">
    <location>
        <position position="50"/>
    </location>
</feature>
<feature type="unsure residue" description="A or S">
    <location>
        <position position="12"/>
    </location>
</feature>
<feature type="unsure residue" description="S or G">
    <location>
        <position position="16"/>
    </location>
</feature>
<sequence length="146" mass="15822">VHLTGEEKSAVAALWSKVNVDEVGGEALGRLLVVYPWTQRFFESFGALSSPDAVMGNPKVKAHGKKVLGAFSDGLAHLDNLKGTFAQLSELHCDKLHVDPENFRLLGNVLVCVLARNFGKEFTPRVQAAFQKVVAGVATALAHKYH</sequence>
<accession>P68015</accession>
<accession>P02045</accession>
<name>HBD_LEONI</name>
<keyword id="KW-0903">Direct protein sequencing</keyword>
<keyword id="KW-0349">Heme</keyword>
<keyword id="KW-0408">Iron</keyword>
<keyword id="KW-0479">Metal-binding</keyword>
<keyword id="KW-0561">Oxygen transport</keyword>
<keyword id="KW-0597">Phosphoprotein</keyword>
<keyword id="KW-0813">Transport</keyword>
<proteinExistence type="evidence at protein level"/>
<comment type="subunit">
    <text>Heterotetramer of two delta chains and two alpha chains.</text>
</comment>
<comment type="tissue specificity">
    <text>Red blood cells.</text>
</comment>
<comment type="similarity">
    <text evidence="2">Belongs to the globin family.</text>
</comment>
<evidence type="ECO:0000250" key="1">
    <source>
        <dbReference type="UniProtKB" id="P02042"/>
    </source>
</evidence>
<evidence type="ECO:0000255" key="2">
    <source>
        <dbReference type="PROSITE-ProRule" id="PRU00238"/>
    </source>
</evidence>
<dbReference type="PIR" id="E02365">
    <property type="entry name" value="HDMKTB"/>
</dbReference>
<dbReference type="SMR" id="P68015"/>
<dbReference type="GO" id="GO:0072562">
    <property type="term" value="C:blood microparticle"/>
    <property type="evidence" value="ECO:0007669"/>
    <property type="project" value="TreeGrafter"/>
</dbReference>
<dbReference type="GO" id="GO:0031838">
    <property type="term" value="C:haptoglobin-hemoglobin complex"/>
    <property type="evidence" value="ECO:0007669"/>
    <property type="project" value="TreeGrafter"/>
</dbReference>
<dbReference type="GO" id="GO:0005833">
    <property type="term" value="C:hemoglobin complex"/>
    <property type="evidence" value="ECO:0007669"/>
    <property type="project" value="InterPro"/>
</dbReference>
<dbReference type="GO" id="GO:0031720">
    <property type="term" value="F:haptoglobin binding"/>
    <property type="evidence" value="ECO:0007669"/>
    <property type="project" value="TreeGrafter"/>
</dbReference>
<dbReference type="GO" id="GO:0020037">
    <property type="term" value="F:heme binding"/>
    <property type="evidence" value="ECO:0007669"/>
    <property type="project" value="InterPro"/>
</dbReference>
<dbReference type="GO" id="GO:0031721">
    <property type="term" value="F:hemoglobin alpha binding"/>
    <property type="evidence" value="ECO:0007669"/>
    <property type="project" value="TreeGrafter"/>
</dbReference>
<dbReference type="GO" id="GO:0046872">
    <property type="term" value="F:metal ion binding"/>
    <property type="evidence" value="ECO:0007669"/>
    <property type="project" value="UniProtKB-KW"/>
</dbReference>
<dbReference type="GO" id="GO:0043177">
    <property type="term" value="F:organic acid binding"/>
    <property type="evidence" value="ECO:0007669"/>
    <property type="project" value="TreeGrafter"/>
</dbReference>
<dbReference type="GO" id="GO:0019825">
    <property type="term" value="F:oxygen binding"/>
    <property type="evidence" value="ECO:0007669"/>
    <property type="project" value="InterPro"/>
</dbReference>
<dbReference type="GO" id="GO:0005344">
    <property type="term" value="F:oxygen carrier activity"/>
    <property type="evidence" value="ECO:0007669"/>
    <property type="project" value="UniProtKB-KW"/>
</dbReference>
<dbReference type="GO" id="GO:0004601">
    <property type="term" value="F:peroxidase activity"/>
    <property type="evidence" value="ECO:0007669"/>
    <property type="project" value="TreeGrafter"/>
</dbReference>
<dbReference type="GO" id="GO:0042744">
    <property type="term" value="P:hydrogen peroxide catabolic process"/>
    <property type="evidence" value="ECO:0007669"/>
    <property type="project" value="TreeGrafter"/>
</dbReference>
<dbReference type="CDD" id="cd08925">
    <property type="entry name" value="Hb-beta-like"/>
    <property type="match status" value="1"/>
</dbReference>
<dbReference type="FunFam" id="1.10.490.10:FF:000001">
    <property type="entry name" value="Hemoglobin subunit beta"/>
    <property type="match status" value="1"/>
</dbReference>
<dbReference type="Gene3D" id="1.10.490.10">
    <property type="entry name" value="Globins"/>
    <property type="match status" value="1"/>
</dbReference>
<dbReference type="InterPro" id="IPR000971">
    <property type="entry name" value="Globin"/>
</dbReference>
<dbReference type="InterPro" id="IPR009050">
    <property type="entry name" value="Globin-like_sf"/>
</dbReference>
<dbReference type="InterPro" id="IPR012292">
    <property type="entry name" value="Globin/Proto"/>
</dbReference>
<dbReference type="InterPro" id="IPR002337">
    <property type="entry name" value="Hemoglobin_b"/>
</dbReference>
<dbReference type="InterPro" id="IPR050056">
    <property type="entry name" value="Hemoglobin_oxygen_transport"/>
</dbReference>
<dbReference type="PANTHER" id="PTHR11442">
    <property type="entry name" value="HEMOGLOBIN FAMILY MEMBER"/>
    <property type="match status" value="1"/>
</dbReference>
<dbReference type="PANTHER" id="PTHR11442:SF42">
    <property type="entry name" value="HEMOGLOBIN SUBUNIT BETA"/>
    <property type="match status" value="1"/>
</dbReference>
<dbReference type="Pfam" id="PF00042">
    <property type="entry name" value="Globin"/>
    <property type="match status" value="1"/>
</dbReference>
<dbReference type="PRINTS" id="PR00814">
    <property type="entry name" value="BETAHAEM"/>
</dbReference>
<dbReference type="SUPFAM" id="SSF46458">
    <property type="entry name" value="Globin-like"/>
    <property type="match status" value="1"/>
</dbReference>
<dbReference type="PROSITE" id="PS01033">
    <property type="entry name" value="GLOBIN"/>
    <property type="match status" value="1"/>
</dbReference>